<accession>Q980L5</accession>
<proteinExistence type="evidence at protein level"/>
<gene>
    <name evidence="1" type="primary">rpo8</name>
    <name evidence="1 3" type="synonym">rpoG</name>
    <name type="ordered locus">SSO0277</name>
</gene>
<organism>
    <name type="scientific">Saccharolobus solfataricus (strain ATCC 35092 / DSM 1617 / JCM 11322 / P2)</name>
    <name type="common">Sulfolobus solfataricus</name>
    <dbReference type="NCBI Taxonomy" id="273057"/>
    <lineage>
        <taxon>Archaea</taxon>
        <taxon>Thermoproteota</taxon>
        <taxon>Thermoprotei</taxon>
        <taxon>Sulfolobales</taxon>
        <taxon>Sulfolobaceae</taxon>
        <taxon>Saccharolobus</taxon>
    </lineage>
</organism>
<protein>
    <recommendedName>
        <fullName evidence="1">DNA-directed RNA polymerase subunit Rpo8</fullName>
        <ecNumber evidence="1">2.7.7.6</ecNumber>
    </recommendedName>
    <alternativeName>
        <fullName evidence="1">DNA-directed RNA polymerase, subunit G</fullName>
    </alternativeName>
</protein>
<evidence type="ECO:0000255" key="1">
    <source>
        <dbReference type="HAMAP-Rule" id="MF_00866"/>
    </source>
</evidence>
<evidence type="ECO:0000269" key="2">
    <source>
    </source>
</evidence>
<evidence type="ECO:0000303" key="3">
    <source>
    </source>
</evidence>
<evidence type="ECO:0007744" key="4">
    <source>
        <dbReference type="PDB" id="3HKZ"/>
    </source>
</evidence>
<evidence type="ECO:0007829" key="5">
    <source>
        <dbReference type="PDB" id="3HKZ"/>
    </source>
</evidence>
<reference key="1">
    <citation type="journal article" date="2001" name="Proc. Natl. Acad. Sci. U.S.A.">
        <title>The complete genome of the crenarchaeon Sulfolobus solfataricus P2.</title>
        <authorList>
            <person name="She Q."/>
            <person name="Singh R.K."/>
            <person name="Confalonieri F."/>
            <person name="Zivanovic Y."/>
            <person name="Allard G."/>
            <person name="Awayez M.J."/>
            <person name="Chan-Weiher C.C.-Y."/>
            <person name="Clausen I.G."/>
            <person name="Curtis B.A."/>
            <person name="De Moors A."/>
            <person name="Erauso G."/>
            <person name="Fletcher C."/>
            <person name="Gordon P.M.K."/>
            <person name="Heikamp-de Jong I."/>
            <person name="Jeffries A.C."/>
            <person name="Kozera C.J."/>
            <person name="Medina N."/>
            <person name="Peng X."/>
            <person name="Thi-Ngoc H.P."/>
            <person name="Redder P."/>
            <person name="Schenk M.E."/>
            <person name="Theriault C."/>
            <person name="Tolstrup N."/>
            <person name="Charlebois R.L."/>
            <person name="Doolittle W.F."/>
            <person name="Duguet M."/>
            <person name="Gaasterland T."/>
            <person name="Garrett R.A."/>
            <person name="Ragan M.A."/>
            <person name="Sensen C.W."/>
            <person name="Van der Oost J."/>
        </authorList>
    </citation>
    <scope>NUCLEOTIDE SEQUENCE [LARGE SCALE GENOMIC DNA]</scope>
    <source>
        <strain>ATCC 35092 / DSM 1617 / JCM 11322 / P2</strain>
    </source>
</reference>
<reference evidence="4" key="2">
    <citation type="journal article" date="2008" name="Nature">
        <title>The X-ray crystal structure of RNA polymerase from Archaea.</title>
        <authorList>
            <person name="Hirata A."/>
            <person name="Klein B.J."/>
            <person name="Murakami K.S."/>
        </authorList>
    </citation>
    <scope>X-RAY CRYSTALLOGRAPHY (3.40 ANGSTROMS) OF THE RNA POLYMERASE COMPLEX</scope>
    <scope>SUBUNIT</scope>
</reference>
<feature type="chain" id="PRO_0000453881" description="DNA-directed RNA polymerase subunit Rpo8">
    <location>
        <begin position="1"/>
        <end position="132"/>
    </location>
</feature>
<feature type="strand" evidence="5">
    <location>
        <begin position="10"/>
        <end position="15"/>
    </location>
</feature>
<feature type="strand" evidence="5">
    <location>
        <begin position="37"/>
        <end position="40"/>
    </location>
</feature>
<feature type="strand" evidence="5">
    <location>
        <begin position="54"/>
        <end position="62"/>
    </location>
</feature>
<feature type="strand" evidence="5">
    <location>
        <begin position="70"/>
        <end position="89"/>
    </location>
</feature>
<feature type="strand" evidence="5">
    <location>
        <begin position="91"/>
        <end position="95"/>
    </location>
</feature>
<feature type="strand" evidence="5">
    <location>
        <begin position="97"/>
        <end position="99"/>
    </location>
</feature>
<feature type="strand" evidence="5">
    <location>
        <begin position="111"/>
        <end position="116"/>
    </location>
</feature>
<name>RPO8_SACS2</name>
<sequence>MMESVAQEIILSCEINSIERGSLKNLSMVNMSCNGFNVSFDIIDSINIFSQKEKVKVIISKNRPSYSHDDFCGHGYIVTELKDSSLNNGNKYTTIISLYGLLVKIISNKESFLRTSQLNIMDHVYFCVKKNN</sequence>
<keyword id="KW-0002">3D-structure</keyword>
<keyword id="KW-0963">Cytoplasm</keyword>
<keyword id="KW-0240">DNA-directed RNA polymerase</keyword>
<keyword id="KW-0548">Nucleotidyltransferase</keyword>
<keyword id="KW-1185">Reference proteome</keyword>
<keyword id="KW-0804">Transcription</keyword>
<keyword id="KW-0808">Transferase</keyword>
<comment type="function">
    <text evidence="1">DNA-dependent RNA polymerase (RNAP) catalyzes the transcription of DNA into RNA using the four ribonucleoside triphosphates as substrates.</text>
</comment>
<comment type="catalytic activity">
    <reaction evidence="1">
        <text>RNA(n) + a ribonucleoside 5'-triphosphate = RNA(n+1) + diphosphate</text>
        <dbReference type="Rhea" id="RHEA:21248"/>
        <dbReference type="Rhea" id="RHEA-COMP:14527"/>
        <dbReference type="Rhea" id="RHEA-COMP:17342"/>
        <dbReference type="ChEBI" id="CHEBI:33019"/>
        <dbReference type="ChEBI" id="CHEBI:61557"/>
        <dbReference type="ChEBI" id="CHEBI:140395"/>
        <dbReference type="EC" id="2.7.7.6"/>
    </reaction>
</comment>
<comment type="subunit">
    <text evidence="2 4">Part of the 13-subunit RNA polymerase complex.</text>
</comment>
<comment type="subcellular location">
    <subcellularLocation>
        <location evidence="1">Cytoplasm</location>
    </subcellularLocation>
</comment>
<comment type="similarity">
    <text evidence="1">Belongs to the archaeal Rpo8 RNA polymerase subunit family.</text>
</comment>
<dbReference type="EC" id="2.7.7.6" evidence="1"/>
<dbReference type="EMBL" id="AE006641">
    <property type="protein sequence ID" value="AAK40615.1"/>
    <property type="molecule type" value="Genomic_DNA"/>
</dbReference>
<dbReference type="PIR" id="H90169">
    <property type="entry name" value="H90169"/>
</dbReference>
<dbReference type="RefSeq" id="WP_009990556.1">
    <property type="nucleotide sequence ID" value="NC_002754.1"/>
</dbReference>
<dbReference type="PDB" id="3HKZ">
    <property type="method" value="X-ray"/>
    <property type="resolution" value="3.40 A"/>
    <property type="chains" value="G/S=1-132"/>
</dbReference>
<dbReference type="PDBsum" id="3HKZ"/>
<dbReference type="SMR" id="Q980L5"/>
<dbReference type="STRING" id="273057.SSO0277"/>
<dbReference type="PaxDb" id="273057-SSO0277"/>
<dbReference type="EnsemblBacteria" id="AAK40615">
    <property type="protein sequence ID" value="AAK40615"/>
    <property type="gene ID" value="SSO0277"/>
</dbReference>
<dbReference type="KEGG" id="sso:SSO0277"/>
<dbReference type="PATRIC" id="fig|273057.12.peg.271"/>
<dbReference type="eggNOG" id="arCOG04271">
    <property type="taxonomic scope" value="Archaea"/>
</dbReference>
<dbReference type="HOGENOM" id="CLU_136588_0_0_2"/>
<dbReference type="InParanoid" id="Q980L5"/>
<dbReference type="BRENDA" id="2.7.7.6">
    <property type="organism ID" value="6163"/>
</dbReference>
<dbReference type="EvolutionaryTrace" id="Q980L5"/>
<dbReference type="Proteomes" id="UP000001974">
    <property type="component" value="Chromosome"/>
</dbReference>
<dbReference type="GO" id="GO:0005737">
    <property type="term" value="C:cytoplasm"/>
    <property type="evidence" value="ECO:0007669"/>
    <property type="project" value="UniProtKB-SubCell"/>
</dbReference>
<dbReference type="GO" id="GO:0000428">
    <property type="term" value="C:DNA-directed RNA polymerase complex"/>
    <property type="evidence" value="ECO:0007669"/>
    <property type="project" value="UniProtKB-KW"/>
</dbReference>
<dbReference type="GO" id="GO:0003899">
    <property type="term" value="F:DNA-directed RNA polymerase activity"/>
    <property type="evidence" value="ECO:0007669"/>
    <property type="project" value="UniProtKB-UniRule"/>
</dbReference>
<dbReference type="GO" id="GO:0006351">
    <property type="term" value="P:DNA-templated transcription"/>
    <property type="evidence" value="ECO:0007669"/>
    <property type="project" value="UniProtKB-UniRule"/>
</dbReference>
<dbReference type="Gene3D" id="2.40.50.140">
    <property type="entry name" value="Nucleic acid-binding proteins"/>
    <property type="match status" value="1"/>
</dbReference>
<dbReference type="HAMAP" id="MF_00866">
    <property type="entry name" value="RNApol_arch_Rpo8"/>
    <property type="match status" value="1"/>
</dbReference>
<dbReference type="InterPro" id="IPR012340">
    <property type="entry name" value="NA-bd_OB-fold"/>
</dbReference>
<dbReference type="InterPro" id="IPR031555">
    <property type="entry name" value="RNA_pol_Rpo8"/>
</dbReference>
<dbReference type="NCBIfam" id="NF011549">
    <property type="entry name" value="PRK14980.1"/>
    <property type="match status" value="1"/>
</dbReference>
<dbReference type="Pfam" id="PF16992">
    <property type="entry name" value="RNA_pol_RpbG"/>
    <property type="match status" value="1"/>
</dbReference>